<feature type="chain" id="PRO_0000290500" description="1-(5-phosphoribosyl)-5-[(5-phosphoribosylamino)methylideneamino] imidazole-4-carboxamide isomerase">
    <location>
        <begin position="1"/>
        <end position="248"/>
    </location>
</feature>
<feature type="active site" description="Proton acceptor" evidence="1">
    <location>
        <position position="8"/>
    </location>
</feature>
<feature type="active site" description="Proton donor" evidence="1">
    <location>
        <position position="131"/>
    </location>
</feature>
<dbReference type="EC" id="5.3.1.16" evidence="1"/>
<dbReference type="EMBL" id="CP000450">
    <property type="protein sequence ID" value="ABI60140.1"/>
    <property type="molecule type" value="Genomic_DNA"/>
</dbReference>
<dbReference type="RefSeq" id="WP_011634942.1">
    <property type="nucleotide sequence ID" value="NC_008344.1"/>
</dbReference>
<dbReference type="SMR" id="Q0AEU2"/>
<dbReference type="STRING" id="335283.Neut_1908"/>
<dbReference type="KEGG" id="net:Neut_1908"/>
<dbReference type="eggNOG" id="COG0106">
    <property type="taxonomic scope" value="Bacteria"/>
</dbReference>
<dbReference type="HOGENOM" id="CLU_048577_1_1_4"/>
<dbReference type="OrthoDB" id="9807749at2"/>
<dbReference type="UniPathway" id="UPA00031">
    <property type="reaction ID" value="UER00009"/>
</dbReference>
<dbReference type="Proteomes" id="UP000001966">
    <property type="component" value="Chromosome"/>
</dbReference>
<dbReference type="GO" id="GO:0005737">
    <property type="term" value="C:cytoplasm"/>
    <property type="evidence" value="ECO:0007669"/>
    <property type="project" value="UniProtKB-SubCell"/>
</dbReference>
<dbReference type="GO" id="GO:0003949">
    <property type="term" value="F:1-(5-phosphoribosyl)-5-[(5-phosphoribosylamino)methylideneamino]imidazole-4-carboxamide isomerase activity"/>
    <property type="evidence" value="ECO:0007669"/>
    <property type="project" value="UniProtKB-UniRule"/>
</dbReference>
<dbReference type="GO" id="GO:0000105">
    <property type="term" value="P:L-histidine biosynthetic process"/>
    <property type="evidence" value="ECO:0007669"/>
    <property type="project" value="UniProtKB-UniRule"/>
</dbReference>
<dbReference type="GO" id="GO:0000162">
    <property type="term" value="P:L-tryptophan biosynthetic process"/>
    <property type="evidence" value="ECO:0007669"/>
    <property type="project" value="TreeGrafter"/>
</dbReference>
<dbReference type="CDD" id="cd04732">
    <property type="entry name" value="HisA"/>
    <property type="match status" value="1"/>
</dbReference>
<dbReference type="FunFam" id="3.20.20.70:FF:000009">
    <property type="entry name" value="1-(5-phosphoribosyl)-5-[(5-phosphoribosylamino)methylideneamino] imidazole-4-carboxamide isomerase"/>
    <property type="match status" value="1"/>
</dbReference>
<dbReference type="Gene3D" id="3.20.20.70">
    <property type="entry name" value="Aldolase class I"/>
    <property type="match status" value="1"/>
</dbReference>
<dbReference type="HAMAP" id="MF_01014">
    <property type="entry name" value="HisA"/>
    <property type="match status" value="1"/>
</dbReference>
<dbReference type="InterPro" id="IPR013785">
    <property type="entry name" value="Aldolase_TIM"/>
</dbReference>
<dbReference type="InterPro" id="IPR006062">
    <property type="entry name" value="His_biosynth"/>
</dbReference>
<dbReference type="InterPro" id="IPR006063">
    <property type="entry name" value="HisA_bact_arch"/>
</dbReference>
<dbReference type="InterPro" id="IPR044524">
    <property type="entry name" value="Isoase_HisA-like"/>
</dbReference>
<dbReference type="InterPro" id="IPR023016">
    <property type="entry name" value="Isoase_HisA-like_bact"/>
</dbReference>
<dbReference type="InterPro" id="IPR011060">
    <property type="entry name" value="RibuloseP-bd_barrel"/>
</dbReference>
<dbReference type="NCBIfam" id="TIGR00007">
    <property type="entry name" value="1-(5-phosphoribosyl)-5-[(5-phosphoribosylamino)methylideneamino]imidazole-4-carboxamide isomerase"/>
    <property type="match status" value="1"/>
</dbReference>
<dbReference type="PANTHER" id="PTHR43090">
    <property type="entry name" value="1-(5-PHOSPHORIBOSYL)-5-[(5-PHOSPHORIBOSYLAMINO)METHYLIDENEAMINO] IMIDAZOLE-4-CARBOXAMIDE ISOMERASE"/>
    <property type="match status" value="1"/>
</dbReference>
<dbReference type="PANTHER" id="PTHR43090:SF2">
    <property type="entry name" value="1-(5-PHOSPHORIBOSYL)-5-[(5-PHOSPHORIBOSYLAMINO)METHYLIDENEAMINO] IMIDAZOLE-4-CARBOXAMIDE ISOMERASE"/>
    <property type="match status" value="1"/>
</dbReference>
<dbReference type="Pfam" id="PF00977">
    <property type="entry name" value="His_biosynth"/>
    <property type="match status" value="1"/>
</dbReference>
<dbReference type="SUPFAM" id="SSF51366">
    <property type="entry name" value="Ribulose-phoshate binding barrel"/>
    <property type="match status" value="1"/>
</dbReference>
<sequence length="248" mass="26424">MLIIPAIDLKDGQCVRLKQGIMEDATVFSETPETVALHWLDNGARQLHLVDLNGAFAGKPKNGEAIRAIVEAIDGRIPIQLGGGIRDLETVEYYLDNGISYVIIGTAAVKIPGFLHDACYAFPGQIMVGLDAKGGKVAVDGWSKVTGHDVIDLAKKFQDYGVEAIIHTDIGRDGMLNGLNIEATVELAQALTIPVIASGGVTNLDDIRKLCQVQSEGITGVITGRAIYQGSLDFKEAQALADQLDSAK</sequence>
<gene>
    <name evidence="1" type="primary">hisA</name>
    <name type="ordered locus">Neut_1908</name>
</gene>
<protein>
    <recommendedName>
        <fullName evidence="1">1-(5-phosphoribosyl)-5-[(5-phosphoribosylamino)methylideneamino] imidazole-4-carboxamide isomerase</fullName>
        <ecNumber evidence="1">5.3.1.16</ecNumber>
    </recommendedName>
    <alternativeName>
        <fullName evidence="1">Phosphoribosylformimino-5-aminoimidazole carboxamide ribotide isomerase</fullName>
    </alternativeName>
</protein>
<proteinExistence type="inferred from homology"/>
<evidence type="ECO:0000255" key="1">
    <source>
        <dbReference type="HAMAP-Rule" id="MF_01014"/>
    </source>
</evidence>
<name>HIS4_NITEC</name>
<reference key="1">
    <citation type="journal article" date="2007" name="Environ. Microbiol.">
        <title>Whole-genome analysis of the ammonia-oxidizing bacterium, Nitrosomonas eutropha C91: implications for niche adaptation.</title>
        <authorList>
            <person name="Stein L.Y."/>
            <person name="Arp D.J."/>
            <person name="Berube P.M."/>
            <person name="Chain P.S."/>
            <person name="Hauser L."/>
            <person name="Jetten M.S."/>
            <person name="Klotz M.G."/>
            <person name="Larimer F.W."/>
            <person name="Norton J.M."/>
            <person name="Op den Camp H.J.M."/>
            <person name="Shin M."/>
            <person name="Wei X."/>
        </authorList>
    </citation>
    <scope>NUCLEOTIDE SEQUENCE [LARGE SCALE GENOMIC DNA]</scope>
    <source>
        <strain>DSM 101675 / C91 / Nm57</strain>
    </source>
</reference>
<organism>
    <name type="scientific">Nitrosomonas eutropha (strain DSM 101675 / C91 / Nm57)</name>
    <dbReference type="NCBI Taxonomy" id="335283"/>
    <lineage>
        <taxon>Bacteria</taxon>
        <taxon>Pseudomonadati</taxon>
        <taxon>Pseudomonadota</taxon>
        <taxon>Betaproteobacteria</taxon>
        <taxon>Nitrosomonadales</taxon>
        <taxon>Nitrosomonadaceae</taxon>
        <taxon>Nitrosomonas</taxon>
    </lineage>
</organism>
<keyword id="KW-0028">Amino-acid biosynthesis</keyword>
<keyword id="KW-0963">Cytoplasm</keyword>
<keyword id="KW-0368">Histidine biosynthesis</keyword>
<keyword id="KW-0413">Isomerase</keyword>
<accession>Q0AEU2</accession>
<comment type="catalytic activity">
    <reaction evidence="1">
        <text>1-(5-phospho-beta-D-ribosyl)-5-[(5-phospho-beta-D-ribosylamino)methylideneamino]imidazole-4-carboxamide = 5-[(5-phospho-1-deoxy-D-ribulos-1-ylimino)methylamino]-1-(5-phospho-beta-D-ribosyl)imidazole-4-carboxamide</text>
        <dbReference type="Rhea" id="RHEA:15469"/>
        <dbReference type="ChEBI" id="CHEBI:58435"/>
        <dbReference type="ChEBI" id="CHEBI:58525"/>
        <dbReference type="EC" id="5.3.1.16"/>
    </reaction>
</comment>
<comment type="pathway">
    <text evidence="1">Amino-acid biosynthesis; L-histidine biosynthesis; L-histidine from 5-phospho-alpha-D-ribose 1-diphosphate: step 4/9.</text>
</comment>
<comment type="subcellular location">
    <subcellularLocation>
        <location evidence="1">Cytoplasm</location>
    </subcellularLocation>
</comment>
<comment type="similarity">
    <text evidence="1">Belongs to the HisA/HisF family.</text>
</comment>